<feature type="chain" id="PRO_0000266832" description="Probable GTP-binding protein EngB">
    <location>
        <begin position="1"/>
        <end position="219"/>
    </location>
</feature>
<feature type="domain" description="EngB-type G" evidence="1">
    <location>
        <begin position="24"/>
        <end position="207"/>
    </location>
</feature>
<feature type="binding site" evidence="1">
    <location>
        <begin position="32"/>
        <end position="39"/>
    </location>
    <ligand>
        <name>GTP</name>
        <dbReference type="ChEBI" id="CHEBI:37565"/>
    </ligand>
</feature>
<feature type="binding site" evidence="1">
    <location>
        <position position="39"/>
    </location>
    <ligand>
        <name>Mg(2+)</name>
        <dbReference type="ChEBI" id="CHEBI:18420"/>
    </ligand>
</feature>
<feature type="binding site" evidence="1">
    <location>
        <begin position="59"/>
        <end position="63"/>
    </location>
    <ligand>
        <name>GTP</name>
        <dbReference type="ChEBI" id="CHEBI:37565"/>
    </ligand>
</feature>
<feature type="binding site" evidence="1">
    <location>
        <position position="61"/>
    </location>
    <ligand>
        <name>Mg(2+)</name>
        <dbReference type="ChEBI" id="CHEBI:18420"/>
    </ligand>
</feature>
<feature type="binding site" evidence="1">
    <location>
        <begin position="81"/>
        <end position="84"/>
    </location>
    <ligand>
        <name>GTP</name>
        <dbReference type="ChEBI" id="CHEBI:37565"/>
    </ligand>
</feature>
<feature type="binding site" evidence="1">
    <location>
        <begin position="148"/>
        <end position="151"/>
    </location>
    <ligand>
        <name>GTP</name>
        <dbReference type="ChEBI" id="CHEBI:37565"/>
    </ligand>
</feature>
<feature type="binding site" evidence="1">
    <location>
        <begin position="186"/>
        <end position="188"/>
    </location>
    <ligand>
        <name>GTP</name>
        <dbReference type="ChEBI" id="CHEBI:37565"/>
    </ligand>
</feature>
<protein>
    <recommendedName>
        <fullName evidence="1">Probable GTP-binding protein EngB</fullName>
    </recommendedName>
</protein>
<evidence type="ECO:0000255" key="1">
    <source>
        <dbReference type="HAMAP-Rule" id="MF_00321"/>
    </source>
</evidence>
<comment type="function">
    <text evidence="1">Necessary for normal cell division and for the maintenance of normal septation.</text>
</comment>
<comment type="cofactor">
    <cofactor evidence="1">
        <name>Mg(2+)</name>
        <dbReference type="ChEBI" id="CHEBI:18420"/>
    </cofactor>
</comment>
<comment type="similarity">
    <text evidence="1">Belongs to the TRAFAC class TrmE-Era-EngA-EngB-Septin-like GTPase superfamily. EngB GTPase family.</text>
</comment>
<keyword id="KW-0131">Cell cycle</keyword>
<keyword id="KW-0132">Cell division</keyword>
<keyword id="KW-0342">GTP-binding</keyword>
<keyword id="KW-0460">Magnesium</keyword>
<keyword id="KW-0479">Metal-binding</keyword>
<keyword id="KW-0547">Nucleotide-binding</keyword>
<keyword id="KW-0717">Septation</keyword>
<proteinExistence type="inferred from homology"/>
<name>ENGB_BURO1</name>
<organism>
    <name type="scientific">Burkholderia orbicola (strain AU 1054)</name>
    <dbReference type="NCBI Taxonomy" id="331271"/>
    <lineage>
        <taxon>Bacteria</taxon>
        <taxon>Pseudomonadati</taxon>
        <taxon>Pseudomonadota</taxon>
        <taxon>Betaproteobacteria</taxon>
        <taxon>Burkholderiales</taxon>
        <taxon>Burkholderiaceae</taxon>
        <taxon>Burkholderia</taxon>
        <taxon>Burkholderia cepacia complex</taxon>
        <taxon>Burkholderia orbicola</taxon>
    </lineage>
</organism>
<gene>
    <name evidence="1" type="primary">engB</name>
    <name type="ordered locus">Bcen_2728</name>
</gene>
<sequence length="219" mass="24359">MAFLLHQARFYTTVNHLRDLPPTVQPEIAFAGRSNAGKSTAINVLCNQKRLAFASKTPGRTQHINYFSVGPAAEPVANLVDLPGYGYAEVPGAAKAHWEMLLSSYLATRSQLCGLILMMDSRRPLTDLDRRMIEWFAPTGKPIHTLLTKCDKLTRQESINALRNTQKGLDAYRDQGVKGKLTVQLFSALKRTGLDEAHELIESWLRPSVADEKSEPVAQ</sequence>
<dbReference type="EMBL" id="CP000378">
    <property type="protein sequence ID" value="ABF77626.1"/>
    <property type="molecule type" value="Genomic_DNA"/>
</dbReference>
<dbReference type="SMR" id="Q1BRX9"/>
<dbReference type="HOGENOM" id="CLU_033732_1_1_4"/>
<dbReference type="GO" id="GO:0005829">
    <property type="term" value="C:cytosol"/>
    <property type="evidence" value="ECO:0007669"/>
    <property type="project" value="TreeGrafter"/>
</dbReference>
<dbReference type="GO" id="GO:0005525">
    <property type="term" value="F:GTP binding"/>
    <property type="evidence" value="ECO:0007669"/>
    <property type="project" value="UniProtKB-UniRule"/>
</dbReference>
<dbReference type="GO" id="GO:0046872">
    <property type="term" value="F:metal ion binding"/>
    <property type="evidence" value="ECO:0007669"/>
    <property type="project" value="UniProtKB-KW"/>
</dbReference>
<dbReference type="GO" id="GO:0000917">
    <property type="term" value="P:division septum assembly"/>
    <property type="evidence" value="ECO:0007669"/>
    <property type="project" value="UniProtKB-KW"/>
</dbReference>
<dbReference type="CDD" id="cd01876">
    <property type="entry name" value="YihA_EngB"/>
    <property type="match status" value="1"/>
</dbReference>
<dbReference type="FunFam" id="3.40.50.300:FF:000098">
    <property type="entry name" value="Probable GTP-binding protein EngB"/>
    <property type="match status" value="1"/>
</dbReference>
<dbReference type="Gene3D" id="3.40.50.300">
    <property type="entry name" value="P-loop containing nucleotide triphosphate hydrolases"/>
    <property type="match status" value="1"/>
</dbReference>
<dbReference type="HAMAP" id="MF_00321">
    <property type="entry name" value="GTPase_EngB"/>
    <property type="match status" value="1"/>
</dbReference>
<dbReference type="InterPro" id="IPR030393">
    <property type="entry name" value="G_ENGB_dom"/>
</dbReference>
<dbReference type="InterPro" id="IPR006073">
    <property type="entry name" value="GTP-bd"/>
</dbReference>
<dbReference type="InterPro" id="IPR019987">
    <property type="entry name" value="GTP-bd_ribosome_bio_YsxC"/>
</dbReference>
<dbReference type="InterPro" id="IPR027417">
    <property type="entry name" value="P-loop_NTPase"/>
</dbReference>
<dbReference type="NCBIfam" id="TIGR03598">
    <property type="entry name" value="GTPase_YsxC"/>
    <property type="match status" value="1"/>
</dbReference>
<dbReference type="PANTHER" id="PTHR11649:SF13">
    <property type="entry name" value="ENGB-TYPE G DOMAIN-CONTAINING PROTEIN"/>
    <property type="match status" value="1"/>
</dbReference>
<dbReference type="PANTHER" id="PTHR11649">
    <property type="entry name" value="MSS1/TRME-RELATED GTP-BINDING PROTEIN"/>
    <property type="match status" value="1"/>
</dbReference>
<dbReference type="Pfam" id="PF01926">
    <property type="entry name" value="MMR_HSR1"/>
    <property type="match status" value="1"/>
</dbReference>
<dbReference type="SUPFAM" id="SSF52540">
    <property type="entry name" value="P-loop containing nucleoside triphosphate hydrolases"/>
    <property type="match status" value="1"/>
</dbReference>
<dbReference type="PROSITE" id="PS51706">
    <property type="entry name" value="G_ENGB"/>
    <property type="match status" value="1"/>
</dbReference>
<accession>Q1BRX9</accession>
<reference key="1">
    <citation type="submission" date="2006-05" db="EMBL/GenBank/DDBJ databases">
        <title>Complete sequence of chromosome 1 of Burkholderia cenocepacia AU 1054.</title>
        <authorList>
            <consortium name="US DOE Joint Genome Institute"/>
            <person name="Copeland A."/>
            <person name="Lucas S."/>
            <person name="Lapidus A."/>
            <person name="Barry K."/>
            <person name="Detter J.C."/>
            <person name="Glavina del Rio T."/>
            <person name="Hammon N."/>
            <person name="Israni S."/>
            <person name="Dalin E."/>
            <person name="Tice H."/>
            <person name="Pitluck S."/>
            <person name="Chain P."/>
            <person name="Malfatti S."/>
            <person name="Shin M."/>
            <person name="Vergez L."/>
            <person name="Schmutz J."/>
            <person name="Larimer F."/>
            <person name="Land M."/>
            <person name="Hauser L."/>
            <person name="Kyrpides N."/>
            <person name="Lykidis A."/>
            <person name="LiPuma J.J."/>
            <person name="Konstantinidis K."/>
            <person name="Tiedje J.M."/>
            <person name="Richardson P."/>
        </authorList>
    </citation>
    <scope>NUCLEOTIDE SEQUENCE [LARGE SCALE GENOMIC DNA]</scope>
    <source>
        <strain>AU 1054</strain>
    </source>
</reference>